<dbReference type="EMBL" id="AL049480">
    <property type="protein sequence ID" value="CAB39595.1"/>
    <property type="molecule type" value="Genomic_DNA"/>
</dbReference>
<dbReference type="EMBL" id="AL161563">
    <property type="protein sequence ID" value="CAB81384.1"/>
    <property type="molecule type" value="Genomic_DNA"/>
</dbReference>
<dbReference type="EMBL" id="CP002687">
    <property type="protein sequence ID" value="AEE85107.1"/>
    <property type="molecule type" value="Genomic_DNA"/>
</dbReference>
<dbReference type="EMBL" id="AY035172">
    <property type="protein sequence ID" value="AAK59676.1"/>
    <property type="molecule type" value="mRNA"/>
</dbReference>
<dbReference type="EMBL" id="AY113926">
    <property type="protein sequence ID" value="AAM44974.1"/>
    <property type="molecule type" value="mRNA"/>
</dbReference>
<dbReference type="PIR" id="T04228">
    <property type="entry name" value="T04228"/>
</dbReference>
<dbReference type="RefSeq" id="NP_194304.1">
    <molecule id="Q9SW09-1"/>
    <property type="nucleotide sequence ID" value="NM_118706.4"/>
</dbReference>
<dbReference type="SMR" id="Q9SW09"/>
<dbReference type="BioGRID" id="13966">
    <property type="interactions" value="35"/>
</dbReference>
<dbReference type="FunCoup" id="Q9SW09">
    <property type="interactions" value="3284"/>
</dbReference>
<dbReference type="IntAct" id="Q9SW09">
    <property type="interactions" value="3"/>
</dbReference>
<dbReference type="STRING" id="3702.Q9SW09"/>
<dbReference type="MetOSite" id="Q9SW09"/>
<dbReference type="PaxDb" id="3702-AT4G25740.1"/>
<dbReference type="EnsemblPlants" id="AT4G25740.1">
    <molecule id="Q9SW09-1"/>
    <property type="protein sequence ID" value="AT4G25740.1"/>
    <property type="gene ID" value="AT4G25740"/>
</dbReference>
<dbReference type="GeneID" id="828679"/>
<dbReference type="Gramene" id="AT4G25740.1">
    <molecule id="Q9SW09-1"/>
    <property type="protein sequence ID" value="AT4G25740.1"/>
    <property type="gene ID" value="AT4G25740"/>
</dbReference>
<dbReference type="KEGG" id="ath:AT4G25740"/>
<dbReference type="Araport" id="AT4G25740"/>
<dbReference type="TAIR" id="AT4G25740"/>
<dbReference type="eggNOG" id="KOG3344">
    <property type="taxonomic scope" value="Eukaryota"/>
</dbReference>
<dbReference type="HOGENOM" id="CLU_089349_0_2_1"/>
<dbReference type="InParanoid" id="Q9SW09"/>
<dbReference type="OMA" id="ERTKIHR"/>
<dbReference type="OrthoDB" id="5211809at2759"/>
<dbReference type="PhylomeDB" id="Q9SW09"/>
<dbReference type="PRO" id="PR:Q9SW09"/>
<dbReference type="Proteomes" id="UP000006548">
    <property type="component" value="Chromosome 4"/>
</dbReference>
<dbReference type="ExpressionAtlas" id="Q9SW09">
    <property type="expression patterns" value="baseline and differential"/>
</dbReference>
<dbReference type="GO" id="GO:0005829">
    <property type="term" value="C:cytosol"/>
    <property type="evidence" value="ECO:0007005"/>
    <property type="project" value="TAIR"/>
</dbReference>
<dbReference type="GO" id="GO:0022626">
    <property type="term" value="C:cytosolic ribosome"/>
    <property type="evidence" value="ECO:0007005"/>
    <property type="project" value="TAIR"/>
</dbReference>
<dbReference type="GO" id="GO:0022627">
    <property type="term" value="C:cytosolic small ribosomal subunit"/>
    <property type="evidence" value="ECO:0007005"/>
    <property type="project" value="TAIR"/>
</dbReference>
<dbReference type="GO" id="GO:0003729">
    <property type="term" value="F:mRNA binding"/>
    <property type="evidence" value="ECO:0000314"/>
    <property type="project" value="TAIR"/>
</dbReference>
<dbReference type="GO" id="GO:0003735">
    <property type="term" value="F:structural constituent of ribosome"/>
    <property type="evidence" value="ECO:0000314"/>
    <property type="project" value="CAFA"/>
</dbReference>
<dbReference type="FunFam" id="1.10.10.10:FF:000025">
    <property type="entry name" value="40S ribosomal protein S10"/>
    <property type="match status" value="1"/>
</dbReference>
<dbReference type="Gene3D" id="1.10.10.10">
    <property type="entry name" value="Winged helix-like DNA-binding domain superfamily/Winged helix DNA-binding domain"/>
    <property type="match status" value="1"/>
</dbReference>
<dbReference type="InterPro" id="IPR005326">
    <property type="entry name" value="Plectin_eS10_N"/>
</dbReference>
<dbReference type="InterPro" id="IPR037447">
    <property type="entry name" value="Ribosomal_eS10"/>
</dbReference>
<dbReference type="InterPro" id="IPR036388">
    <property type="entry name" value="WH-like_DNA-bd_sf"/>
</dbReference>
<dbReference type="PANTHER" id="PTHR12146">
    <property type="entry name" value="40S RIBOSOMAL PROTEIN S10"/>
    <property type="match status" value="1"/>
</dbReference>
<dbReference type="PANTHER" id="PTHR12146:SF24">
    <property type="entry name" value="SMALL RIBOSOMAL SUBUNIT PROTEIN ES10Z"/>
    <property type="match status" value="1"/>
</dbReference>
<dbReference type="Pfam" id="PF03501">
    <property type="entry name" value="S10_plectin"/>
    <property type="match status" value="1"/>
</dbReference>
<gene>
    <name type="primary">RPS10A</name>
    <name type="ordered locus">At4g25740</name>
    <name type="ORF">F14M19.20</name>
</gene>
<keyword id="KW-0025">Alternative splicing</keyword>
<keyword id="KW-0963">Cytoplasm</keyword>
<keyword id="KW-1185">Reference proteome</keyword>
<keyword id="KW-0687">Ribonucleoprotein</keyword>
<keyword id="KW-0689">Ribosomal protein</keyword>
<evidence type="ECO:0000250" key="1"/>
<evidence type="ECO:0000256" key="2">
    <source>
        <dbReference type="SAM" id="MobiDB-lite"/>
    </source>
</evidence>
<evidence type="ECO:0000303" key="3">
    <source>
    </source>
</evidence>
<evidence type="ECO:0000305" key="4"/>
<proteinExistence type="evidence at protein level"/>
<accession>Q9SW09</accession>
<reference key="1">
    <citation type="journal article" date="1999" name="Nature">
        <title>Sequence and analysis of chromosome 4 of the plant Arabidopsis thaliana.</title>
        <authorList>
            <person name="Mayer K.F.X."/>
            <person name="Schueller C."/>
            <person name="Wambutt R."/>
            <person name="Murphy G."/>
            <person name="Volckaert G."/>
            <person name="Pohl T."/>
            <person name="Duesterhoeft A."/>
            <person name="Stiekema W."/>
            <person name="Entian K.-D."/>
            <person name="Terryn N."/>
            <person name="Harris B."/>
            <person name="Ansorge W."/>
            <person name="Brandt P."/>
            <person name="Grivell L.A."/>
            <person name="Rieger M."/>
            <person name="Weichselgartner M."/>
            <person name="de Simone V."/>
            <person name="Obermaier B."/>
            <person name="Mache R."/>
            <person name="Mueller M."/>
            <person name="Kreis M."/>
            <person name="Delseny M."/>
            <person name="Puigdomenech P."/>
            <person name="Watson M."/>
            <person name="Schmidtheini T."/>
            <person name="Reichert B."/>
            <person name="Portetelle D."/>
            <person name="Perez-Alonso M."/>
            <person name="Boutry M."/>
            <person name="Bancroft I."/>
            <person name="Vos P."/>
            <person name="Hoheisel J."/>
            <person name="Zimmermann W."/>
            <person name="Wedler H."/>
            <person name="Ridley P."/>
            <person name="Langham S.-A."/>
            <person name="McCullagh B."/>
            <person name="Bilham L."/>
            <person name="Robben J."/>
            <person name="van der Schueren J."/>
            <person name="Grymonprez B."/>
            <person name="Chuang Y.-J."/>
            <person name="Vandenbussche F."/>
            <person name="Braeken M."/>
            <person name="Weltjens I."/>
            <person name="Voet M."/>
            <person name="Bastiaens I."/>
            <person name="Aert R."/>
            <person name="Defoor E."/>
            <person name="Weitzenegger T."/>
            <person name="Bothe G."/>
            <person name="Ramsperger U."/>
            <person name="Hilbert H."/>
            <person name="Braun M."/>
            <person name="Holzer E."/>
            <person name="Brandt A."/>
            <person name="Peters S."/>
            <person name="van Staveren M."/>
            <person name="Dirkse W."/>
            <person name="Mooijman P."/>
            <person name="Klein Lankhorst R."/>
            <person name="Rose M."/>
            <person name="Hauf J."/>
            <person name="Koetter P."/>
            <person name="Berneiser S."/>
            <person name="Hempel S."/>
            <person name="Feldpausch M."/>
            <person name="Lamberth S."/>
            <person name="Van den Daele H."/>
            <person name="De Keyser A."/>
            <person name="Buysshaert C."/>
            <person name="Gielen J."/>
            <person name="Villarroel R."/>
            <person name="De Clercq R."/>
            <person name="van Montagu M."/>
            <person name="Rogers J."/>
            <person name="Cronin A."/>
            <person name="Quail M.A."/>
            <person name="Bray-Allen S."/>
            <person name="Clark L."/>
            <person name="Doggett J."/>
            <person name="Hall S."/>
            <person name="Kay M."/>
            <person name="Lennard N."/>
            <person name="McLay K."/>
            <person name="Mayes R."/>
            <person name="Pettett A."/>
            <person name="Rajandream M.A."/>
            <person name="Lyne M."/>
            <person name="Benes V."/>
            <person name="Rechmann S."/>
            <person name="Borkova D."/>
            <person name="Bloecker H."/>
            <person name="Scharfe M."/>
            <person name="Grimm M."/>
            <person name="Loehnert T.-H."/>
            <person name="Dose S."/>
            <person name="de Haan M."/>
            <person name="Maarse A.C."/>
            <person name="Schaefer M."/>
            <person name="Mueller-Auer S."/>
            <person name="Gabel C."/>
            <person name="Fuchs M."/>
            <person name="Fartmann B."/>
            <person name="Granderath K."/>
            <person name="Dauner D."/>
            <person name="Herzl A."/>
            <person name="Neumann S."/>
            <person name="Argiriou A."/>
            <person name="Vitale D."/>
            <person name="Liguori R."/>
            <person name="Piravandi E."/>
            <person name="Massenet O."/>
            <person name="Quigley F."/>
            <person name="Clabauld G."/>
            <person name="Muendlein A."/>
            <person name="Felber R."/>
            <person name="Schnabl S."/>
            <person name="Hiller R."/>
            <person name="Schmidt W."/>
            <person name="Lecharny A."/>
            <person name="Aubourg S."/>
            <person name="Chefdor F."/>
            <person name="Cooke R."/>
            <person name="Berger C."/>
            <person name="Monfort A."/>
            <person name="Casacuberta E."/>
            <person name="Gibbons T."/>
            <person name="Weber N."/>
            <person name="Vandenbol M."/>
            <person name="Bargues M."/>
            <person name="Terol J."/>
            <person name="Torres A."/>
            <person name="Perez-Perez A."/>
            <person name="Purnelle B."/>
            <person name="Bent E."/>
            <person name="Johnson S."/>
            <person name="Tacon D."/>
            <person name="Jesse T."/>
            <person name="Heijnen L."/>
            <person name="Schwarz S."/>
            <person name="Scholler P."/>
            <person name="Heber S."/>
            <person name="Francs P."/>
            <person name="Bielke C."/>
            <person name="Frishman D."/>
            <person name="Haase D."/>
            <person name="Lemcke K."/>
            <person name="Mewes H.-W."/>
            <person name="Stocker S."/>
            <person name="Zaccaria P."/>
            <person name="Bevan M."/>
            <person name="Wilson R.K."/>
            <person name="de la Bastide M."/>
            <person name="Habermann K."/>
            <person name="Parnell L."/>
            <person name="Dedhia N."/>
            <person name="Gnoj L."/>
            <person name="Schutz K."/>
            <person name="Huang E."/>
            <person name="Spiegel L."/>
            <person name="Sekhon M."/>
            <person name="Murray J."/>
            <person name="Sheet P."/>
            <person name="Cordes M."/>
            <person name="Abu-Threideh J."/>
            <person name="Stoneking T."/>
            <person name="Kalicki J."/>
            <person name="Graves T."/>
            <person name="Harmon G."/>
            <person name="Edwards J."/>
            <person name="Latreille P."/>
            <person name="Courtney L."/>
            <person name="Cloud J."/>
            <person name="Abbott A."/>
            <person name="Scott K."/>
            <person name="Johnson D."/>
            <person name="Minx P."/>
            <person name="Bentley D."/>
            <person name="Fulton B."/>
            <person name="Miller N."/>
            <person name="Greco T."/>
            <person name="Kemp K."/>
            <person name="Kramer J."/>
            <person name="Fulton L."/>
            <person name="Mardis E."/>
            <person name="Dante M."/>
            <person name="Pepin K."/>
            <person name="Hillier L.W."/>
            <person name="Nelson J."/>
            <person name="Spieth J."/>
            <person name="Ryan E."/>
            <person name="Andrews S."/>
            <person name="Geisel C."/>
            <person name="Layman D."/>
            <person name="Du H."/>
            <person name="Ali J."/>
            <person name="Berghoff A."/>
            <person name="Jones K."/>
            <person name="Drone K."/>
            <person name="Cotton M."/>
            <person name="Joshu C."/>
            <person name="Antonoiu B."/>
            <person name="Zidanic M."/>
            <person name="Strong C."/>
            <person name="Sun H."/>
            <person name="Lamar B."/>
            <person name="Yordan C."/>
            <person name="Ma P."/>
            <person name="Zhong J."/>
            <person name="Preston R."/>
            <person name="Vil D."/>
            <person name="Shekher M."/>
            <person name="Matero A."/>
            <person name="Shah R."/>
            <person name="Swaby I.K."/>
            <person name="O'Shaughnessy A."/>
            <person name="Rodriguez M."/>
            <person name="Hoffman J."/>
            <person name="Till S."/>
            <person name="Granat S."/>
            <person name="Shohdy N."/>
            <person name="Hasegawa A."/>
            <person name="Hameed A."/>
            <person name="Lodhi M."/>
            <person name="Johnson A."/>
            <person name="Chen E."/>
            <person name="Marra M.A."/>
            <person name="Martienssen R."/>
            <person name="McCombie W.R."/>
        </authorList>
    </citation>
    <scope>NUCLEOTIDE SEQUENCE [LARGE SCALE GENOMIC DNA]</scope>
    <source>
        <strain>cv. Columbia</strain>
    </source>
</reference>
<reference key="2">
    <citation type="journal article" date="2017" name="Plant J.">
        <title>Araport11: a complete reannotation of the Arabidopsis thaliana reference genome.</title>
        <authorList>
            <person name="Cheng C.Y."/>
            <person name="Krishnakumar V."/>
            <person name="Chan A.P."/>
            <person name="Thibaud-Nissen F."/>
            <person name="Schobel S."/>
            <person name="Town C.D."/>
        </authorList>
    </citation>
    <scope>GENOME REANNOTATION</scope>
    <source>
        <strain>cv. Columbia</strain>
    </source>
</reference>
<reference key="3">
    <citation type="journal article" date="2003" name="Science">
        <title>Empirical analysis of transcriptional activity in the Arabidopsis genome.</title>
        <authorList>
            <person name="Yamada K."/>
            <person name="Lim J."/>
            <person name="Dale J.M."/>
            <person name="Chen H."/>
            <person name="Shinn P."/>
            <person name="Palm C.J."/>
            <person name="Southwick A.M."/>
            <person name="Wu H.C."/>
            <person name="Kim C.J."/>
            <person name="Nguyen M."/>
            <person name="Pham P.K."/>
            <person name="Cheuk R.F."/>
            <person name="Karlin-Newmann G."/>
            <person name="Liu S.X."/>
            <person name="Lam B."/>
            <person name="Sakano H."/>
            <person name="Wu T."/>
            <person name="Yu G."/>
            <person name="Miranda M."/>
            <person name="Quach H.L."/>
            <person name="Tripp M."/>
            <person name="Chang C.H."/>
            <person name="Lee J.M."/>
            <person name="Toriumi M.J."/>
            <person name="Chan M.M."/>
            <person name="Tang C.C."/>
            <person name="Onodera C.S."/>
            <person name="Deng J.M."/>
            <person name="Akiyama K."/>
            <person name="Ansari Y."/>
            <person name="Arakawa T."/>
            <person name="Banh J."/>
            <person name="Banno F."/>
            <person name="Bowser L."/>
            <person name="Brooks S.Y."/>
            <person name="Carninci P."/>
            <person name="Chao Q."/>
            <person name="Choy N."/>
            <person name="Enju A."/>
            <person name="Goldsmith A.D."/>
            <person name="Gurjal M."/>
            <person name="Hansen N.F."/>
            <person name="Hayashizaki Y."/>
            <person name="Johnson-Hopson C."/>
            <person name="Hsuan V.W."/>
            <person name="Iida K."/>
            <person name="Karnes M."/>
            <person name="Khan S."/>
            <person name="Koesema E."/>
            <person name="Ishida J."/>
            <person name="Jiang P.X."/>
            <person name="Jones T."/>
            <person name="Kawai J."/>
            <person name="Kamiya A."/>
            <person name="Meyers C."/>
            <person name="Nakajima M."/>
            <person name="Narusaka M."/>
            <person name="Seki M."/>
            <person name="Sakurai T."/>
            <person name="Satou M."/>
            <person name="Tamse R."/>
            <person name="Vaysberg M."/>
            <person name="Wallender E.K."/>
            <person name="Wong C."/>
            <person name="Yamamura Y."/>
            <person name="Yuan S."/>
            <person name="Shinozaki K."/>
            <person name="Davis R.W."/>
            <person name="Theologis A."/>
            <person name="Ecker J.R."/>
        </authorList>
    </citation>
    <scope>NUCLEOTIDE SEQUENCE [LARGE SCALE MRNA]</scope>
    <source>
        <strain>cv. Columbia</strain>
    </source>
</reference>
<reference key="4">
    <citation type="journal article" date="2001" name="Plant Physiol.">
        <title>The organization of cytoplasmic ribosomal protein genes in the Arabidopsis genome.</title>
        <authorList>
            <person name="Barakat A."/>
            <person name="Szick-Miranda K."/>
            <person name="Chang I.-F."/>
            <person name="Guyot R."/>
            <person name="Blanc G."/>
            <person name="Cooke R."/>
            <person name="Delseny M."/>
            <person name="Bailey-Serres J."/>
        </authorList>
    </citation>
    <scope>GENE FAMILY ORGANIZATION</scope>
    <scope>NOMENCLATURE</scope>
</reference>
<reference key="5">
    <citation type="journal article" date="2023" name="Plant Cell">
        <title>An updated nomenclature for plant ribosomal protein genes.</title>
        <authorList>
            <person name="Scarpin M.R."/>
            <person name="Busche M."/>
            <person name="Martinez R.E."/>
            <person name="Harper L.C."/>
            <person name="Reiser L."/>
            <person name="Szakonyi D."/>
            <person name="Merchante C."/>
            <person name="Lan T."/>
            <person name="Xiong W."/>
            <person name="Mo B."/>
            <person name="Tang G."/>
            <person name="Chen X."/>
            <person name="Bailey-Serres J."/>
            <person name="Browning K.S."/>
            <person name="Brunkard J.O."/>
        </authorList>
    </citation>
    <scope>NOMENCLATURE</scope>
</reference>
<organism>
    <name type="scientific">Arabidopsis thaliana</name>
    <name type="common">Mouse-ear cress</name>
    <dbReference type="NCBI Taxonomy" id="3702"/>
    <lineage>
        <taxon>Eukaryota</taxon>
        <taxon>Viridiplantae</taxon>
        <taxon>Streptophyta</taxon>
        <taxon>Embryophyta</taxon>
        <taxon>Tracheophyta</taxon>
        <taxon>Spermatophyta</taxon>
        <taxon>Magnoliopsida</taxon>
        <taxon>eudicotyledons</taxon>
        <taxon>Gunneridae</taxon>
        <taxon>Pentapetalae</taxon>
        <taxon>rosids</taxon>
        <taxon>malvids</taxon>
        <taxon>Brassicales</taxon>
        <taxon>Brassicaceae</taxon>
        <taxon>Camelineae</taxon>
        <taxon>Arabidopsis</taxon>
    </lineage>
</organism>
<protein>
    <recommendedName>
        <fullName evidence="3">Small ribosomal subunit protein eS10z</fullName>
    </recommendedName>
    <alternativeName>
        <fullName>40S ribosomal protein S10-1</fullName>
    </alternativeName>
</protein>
<feature type="chain" id="PRO_0000116370" description="Small ribosomal subunit protein eS10z">
    <location>
        <begin position="1"/>
        <end position="177"/>
    </location>
</feature>
<feature type="region of interest" description="Disordered" evidence="2">
    <location>
        <begin position="90"/>
        <end position="177"/>
    </location>
</feature>
<feature type="compositionally biased region" description="Basic and acidic residues" evidence="2">
    <location>
        <begin position="108"/>
        <end position="140"/>
    </location>
</feature>
<feature type="compositionally biased region" description="Low complexity" evidence="2">
    <location>
        <begin position="141"/>
        <end position="150"/>
    </location>
</feature>
<feature type="compositionally biased region" description="Gly residues" evidence="2">
    <location>
        <begin position="151"/>
        <end position="165"/>
    </location>
</feature>
<feature type="compositionally biased region" description="Low complexity" evidence="2">
    <location>
        <begin position="166"/>
        <end position="177"/>
    </location>
</feature>
<comment type="interaction">
    <interactant intactId="EBI-4459297">
        <id>Q9SW09</id>
    </interactant>
    <interactant intactId="EBI-15206626">
        <id>Q9S851</id>
        <label>NAC031</label>
    </interactant>
    <organismsDiffer>false</organismsDiffer>
    <experiments>3</experiments>
</comment>
<comment type="subcellular location">
    <subcellularLocation>
        <location evidence="1">Cytoplasm</location>
    </subcellularLocation>
</comment>
<comment type="alternative products">
    <event type="alternative splicing"/>
    <isoform>
        <id>Q9SW09-1</id>
        <name>1</name>
        <sequence type="displayed"/>
    </isoform>
    <text>A number of isoforms are produced. According to EST sequences.</text>
</comment>
<comment type="similarity">
    <text evidence="4">Belongs to the eukaryotic ribosomal protein eS10 family.</text>
</comment>
<name>RS101_ARATH</name>
<sequence>MIISENNRREICKYLFKEGVCFAKKDFNLPKHPLIDVPNLQVIKLMQSFKSKEYVRETFAWMHYYWFLTNEGIEFLRTYLNLPSDVVPATLKKSAKPGGRPFGGPPGDRQRGPPRSDGDRPRFGDRDGYRGGPRGGDEKGGAPADFQPSFQGGGGRPGFGRGAGGYSAAAPSGSGFP</sequence>